<comment type="catalytic activity">
    <reaction>
        <text>[(1-&gt;4)-beta-D-glucosyl](n) + UDP-alpha-D-glucose = [(1-&gt;4)-beta-D-glucosyl](n+1) + UDP + H(+)</text>
        <dbReference type="Rhea" id="RHEA:19929"/>
        <dbReference type="Rhea" id="RHEA-COMP:10033"/>
        <dbReference type="Rhea" id="RHEA-COMP:10034"/>
        <dbReference type="ChEBI" id="CHEBI:15378"/>
        <dbReference type="ChEBI" id="CHEBI:18246"/>
        <dbReference type="ChEBI" id="CHEBI:58223"/>
        <dbReference type="ChEBI" id="CHEBI:58885"/>
        <dbReference type="EC" id="2.4.1.12"/>
    </reaction>
</comment>
<comment type="pathway">
    <text>Glycan metabolism; bacterial cellulose biosynthesis.</text>
</comment>
<comment type="subcellular location">
    <subcellularLocation>
        <location evidence="4">Cell inner membrane</location>
        <topology evidence="4">Multi-pass membrane protein</topology>
    </subcellularLocation>
</comment>
<comment type="domain">
    <text>There are two conserved domains in the globular part of the catalytic subunit: the N-terminal domain (domain A) contains the conserved DXD motif and is possibly involved in catalysis and substrate binding. The C-terminal domain (domain B) contains the QXXRW motif and is present only in processive glycosyl transferases. It could be involved in the processivity function of the enzyme, possibly required for holding the growing glycan chain in the active site.</text>
</comment>
<comment type="similarity">
    <text evidence="4">In the N-terminal section; belongs to the glycosyltransferase 2 family.</text>
</comment>
<comment type="similarity">
    <text evidence="4">In the C-terminal section; belongs to the AcsB/BcsB family.</text>
</comment>
<evidence type="ECO:0000250" key="1"/>
<evidence type="ECO:0000255" key="2"/>
<evidence type="ECO:0000256" key="3">
    <source>
        <dbReference type="SAM" id="MobiDB-lite"/>
    </source>
</evidence>
<evidence type="ECO:0000305" key="4"/>
<dbReference type="EC" id="2.4.1.12"/>
<dbReference type="EMBL" id="AB015804">
    <property type="protein sequence ID" value="BAA77600.1"/>
    <property type="molecule type" value="Genomic_DNA"/>
</dbReference>
<dbReference type="SMR" id="Q9WX75"/>
<dbReference type="CAZy" id="GT2">
    <property type="family name" value="Glycosyltransferase Family 2"/>
</dbReference>
<dbReference type="UniPathway" id="UPA00694"/>
<dbReference type="GO" id="GO:0005886">
    <property type="term" value="C:plasma membrane"/>
    <property type="evidence" value="ECO:0007669"/>
    <property type="project" value="UniProtKB-SubCell"/>
</dbReference>
<dbReference type="GO" id="GO:0016760">
    <property type="term" value="F:cellulose synthase (UDP-forming) activity"/>
    <property type="evidence" value="ECO:0007669"/>
    <property type="project" value="UniProtKB-EC"/>
</dbReference>
<dbReference type="GO" id="GO:0035438">
    <property type="term" value="F:cyclic-di-GMP binding"/>
    <property type="evidence" value="ECO:0007669"/>
    <property type="project" value="InterPro"/>
</dbReference>
<dbReference type="GO" id="GO:0030244">
    <property type="term" value="P:cellulose biosynthetic process"/>
    <property type="evidence" value="ECO:0007669"/>
    <property type="project" value="UniProtKB-KW"/>
</dbReference>
<dbReference type="GO" id="GO:0006011">
    <property type="term" value="P:UDP-alpha-D-glucose metabolic process"/>
    <property type="evidence" value="ECO:0007669"/>
    <property type="project" value="InterPro"/>
</dbReference>
<dbReference type="CDD" id="cd06421">
    <property type="entry name" value="CESA_CelA_like"/>
    <property type="match status" value="1"/>
</dbReference>
<dbReference type="Gene3D" id="2.60.120.260">
    <property type="entry name" value="Galactose-binding domain-like"/>
    <property type="match status" value="2"/>
</dbReference>
<dbReference type="Gene3D" id="2.40.10.220">
    <property type="entry name" value="predicted glycosyltransferase like domains"/>
    <property type="match status" value="1"/>
</dbReference>
<dbReference type="Gene3D" id="3.90.550.10">
    <property type="entry name" value="Spore Coat Polysaccharide Biosynthesis Protein SpsA, Chain A"/>
    <property type="match status" value="1"/>
</dbReference>
<dbReference type="InterPro" id="IPR003919">
    <property type="entry name" value="Cell_synth_A"/>
</dbReference>
<dbReference type="InterPro" id="IPR003920">
    <property type="entry name" value="Cell_synth_B"/>
</dbReference>
<dbReference type="InterPro" id="IPR018513">
    <property type="entry name" value="Cell_synthase_bac"/>
</dbReference>
<dbReference type="InterPro" id="IPR005150">
    <property type="entry name" value="Cellulose_synth"/>
</dbReference>
<dbReference type="InterPro" id="IPR001173">
    <property type="entry name" value="Glyco_trans_2-like"/>
</dbReference>
<dbReference type="InterPro" id="IPR050321">
    <property type="entry name" value="Glycosyltr_2/OpgH_subfam"/>
</dbReference>
<dbReference type="InterPro" id="IPR029044">
    <property type="entry name" value="Nucleotide-diphossugar_trans"/>
</dbReference>
<dbReference type="InterPro" id="IPR009875">
    <property type="entry name" value="PilZ_domain"/>
</dbReference>
<dbReference type="NCBIfam" id="TIGR03030">
    <property type="entry name" value="CelA"/>
    <property type="match status" value="1"/>
</dbReference>
<dbReference type="PANTHER" id="PTHR43867">
    <property type="entry name" value="CELLULOSE SYNTHASE CATALYTIC SUBUNIT A [UDP-FORMING]"/>
    <property type="match status" value="1"/>
</dbReference>
<dbReference type="PANTHER" id="PTHR43867:SF2">
    <property type="entry name" value="CELLULOSE SYNTHASE CATALYTIC SUBUNIT A [UDP-FORMING]"/>
    <property type="match status" value="1"/>
</dbReference>
<dbReference type="Pfam" id="PF03170">
    <property type="entry name" value="BcsB"/>
    <property type="match status" value="1"/>
</dbReference>
<dbReference type="Pfam" id="PF03552">
    <property type="entry name" value="Cellulose_synt"/>
    <property type="match status" value="1"/>
</dbReference>
<dbReference type="Pfam" id="PF00535">
    <property type="entry name" value="Glycos_transf_2"/>
    <property type="match status" value="1"/>
</dbReference>
<dbReference type="Pfam" id="PF07238">
    <property type="entry name" value="PilZ"/>
    <property type="match status" value="1"/>
</dbReference>
<dbReference type="PRINTS" id="PR01440">
    <property type="entry name" value="CELLSNTHASEB"/>
</dbReference>
<dbReference type="SUPFAM" id="SSF53448">
    <property type="entry name" value="Nucleotide-diphospho-sugar transferases"/>
    <property type="match status" value="1"/>
</dbReference>
<dbReference type="SUPFAM" id="SSF141371">
    <property type="entry name" value="PilZ domain-like"/>
    <property type="match status" value="1"/>
</dbReference>
<feature type="chain" id="PRO_0000059266" description="Putative cellulose synthase 3">
    <location>
        <begin position="1"/>
        <end position="1518"/>
    </location>
</feature>
<feature type="transmembrane region" description="Helical" evidence="2">
    <location>
        <begin position="24"/>
        <end position="44"/>
    </location>
</feature>
<feature type="transmembrane region" description="Helical" evidence="2">
    <location>
        <begin position="71"/>
        <end position="91"/>
    </location>
</feature>
<feature type="transmembrane region" description="Helical" evidence="2">
    <location>
        <begin position="105"/>
        <end position="125"/>
    </location>
</feature>
<feature type="transmembrane region" description="Helical" evidence="2">
    <location>
        <begin position="404"/>
        <end position="424"/>
    </location>
</feature>
<feature type="transmembrane region" description="Helical" evidence="2">
    <location>
        <begin position="428"/>
        <end position="448"/>
    </location>
</feature>
<feature type="transmembrane region" description="Helical" evidence="2">
    <location>
        <begin position="465"/>
        <end position="485"/>
    </location>
</feature>
<feature type="transmembrane region" description="Helical" evidence="2">
    <location>
        <begin position="514"/>
        <end position="534"/>
    </location>
</feature>
<feature type="transmembrane region" description="Helical" evidence="2">
    <location>
        <begin position="543"/>
        <end position="563"/>
    </location>
</feature>
<feature type="transmembrane region" description="Helical" evidence="2">
    <location>
        <begin position="1481"/>
        <end position="1501"/>
    </location>
</feature>
<feature type="domain" description="PilZ">
    <location>
        <begin position="569"/>
        <end position="668"/>
    </location>
</feature>
<feature type="region of interest" description="Catalytic">
    <location>
        <begin position="1"/>
        <end position="731"/>
    </location>
</feature>
<feature type="region of interest" description="Catalytic subdomain A">
    <location>
        <begin position="144"/>
        <end position="237"/>
    </location>
</feature>
<feature type="region of interest" description="Catalytic subdomain B">
    <location>
        <begin position="314"/>
        <end position="374"/>
    </location>
</feature>
<feature type="region of interest" description="Cyclic di-GMP binding domain" evidence="1">
    <location>
        <begin position="732"/>
        <end position="1518"/>
    </location>
</feature>
<feature type="region of interest" description="Disordered" evidence="3">
    <location>
        <begin position="765"/>
        <end position="785"/>
    </location>
</feature>
<feature type="compositionally biased region" description="Polar residues" evidence="3">
    <location>
        <begin position="768"/>
        <end position="785"/>
    </location>
</feature>
<feature type="active site" evidence="2">
    <location>
        <position position="186"/>
    </location>
</feature>
<feature type="active site" evidence="2">
    <location>
        <position position="330"/>
    </location>
</feature>
<feature type="site" description="Important for substrate binding" evidence="2">
    <location>
        <position position="233"/>
    </location>
</feature>
<feature type="site" description="Important for substrate binding" evidence="2">
    <location>
        <position position="235"/>
    </location>
</feature>
<keyword id="KW-0997">Cell inner membrane</keyword>
<keyword id="KW-1003">Cell membrane</keyword>
<keyword id="KW-0135">Cellulose biosynthesis</keyword>
<keyword id="KW-0328">Glycosyltransferase</keyword>
<keyword id="KW-0472">Membrane</keyword>
<keyword id="KW-0808">Transferase</keyword>
<keyword id="KW-0812">Transmembrane</keyword>
<keyword id="KW-1133">Transmembrane helix</keyword>
<reference key="1">
    <citation type="journal article" date="1999" name="DNA Res.">
        <title>Cloning of cellulose synthase genes from Acetobacter xylinum JCM 7664: implication of a novel set of cellulose synthase genes.</title>
        <authorList>
            <person name="Umeda Y."/>
            <person name="Hirano A."/>
            <person name="Ishibashi M."/>
            <person name="Akiyama H."/>
            <person name="Onizuka T."/>
            <person name="Ikeuchi M."/>
            <person name="Inoue Y."/>
        </authorList>
    </citation>
    <scope>NUCLEOTIDE SEQUENCE [GENOMIC DNA]</scope>
    <source>
        <strain>JCM 7664 / NBRC 13693</strain>
    </source>
</reference>
<protein>
    <recommendedName>
        <fullName>Putative cellulose synthase 3</fullName>
    </recommendedName>
    <domain>
        <recommendedName>
            <fullName>Cellulose synthase catalytic subunit [UDP-forming]</fullName>
            <ecNumber>2.4.1.12</ecNumber>
        </recommendedName>
    </domain>
    <domain>
        <recommendedName>
            <fullName>Cyclic di-GMP-binding domain</fullName>
        </recommendedName>
        <alternativeName>
            <fullName>Cellulose synthase 3 regulatory subunit</fullName>
        </alternativeName>
    </domain>
</protein>
<proteinExistence type="inferred from homology"/>
<accession>Q9WX75</accession>
<sequence length="1518" mass="166465">MYGTWFTTGKVTDLLARTGLDRVPVWVPVVLGVVLMAFVGSVRIDPALQGWVSIGTVTLLLVLNRRRGRGITVFLMMLSLLVSLRYIVWRLTATVQFSNWLQTALAVLLLLAEAYALMTLCLSYFQMAWPLRRREHPLPEDMAQWPSVDVFVPSYNEELSLVRSTVLGALDLDWPADRLNVYILDDGRRKAFHDFAVEAGAGYIIRAENNHAKAGNLNHALAVTDSPFAVIFDCDHVPTRGFLRRTIGWMMADPNLALLQTPHHFYAPDPFQRNLAGGMHVPPEGNMFYGLVQDGNDFWDATFFCGSCAIIRREAVMGIGGFATETVTEDAHTALKMQRRGWGTAYLREPLAAGLATERLILHIGQRVRWARGMIQIMRLDNPMLGAGLRWEQRLCYLSAMSHFLFAIPRLTFLVSPLAFLFLGQNIIAASPLAISVYALPHIFHSVITLSRIEGRWRYSFWSEIYETSLALFLVRITIVTLLQPHKGKFNVTDKGGLLARGYFDWDAVYPNVILAGVLCAALLRGVFGIVWQFHDRLALQSFILNTLWVVISLIIVLASIAVGRETRQTRNAPRVSVRLPVVVTDAHGRQMEGHTHDISLGGLAVGTRLATPDMVGGEVTVRYDSARDGIHVGVPARVLDARDGTLRLRWAVRDLEDERQVVSMVFGRNDAWAGWADFAPDRPLRSLAMVFRSIGGLLRRRPAEAPRALHEMGEGELPATEEKLEKQSFVLKPVPRSARHGATASAALFVAFTALVPAAMAQEAPSPDQSGVTAETPFGDSNTGVVPDALPAIDPAVADRISDAEVTRTLTFRNLGATTGPLTLRGYSPLQGLDVVVPANRVVTHAQLTLSGALSPSLLPEANAVTVTLNEQYVGTLKVDPQHPQFGPVSFDIDPLYFTGDNKLNFHFAGEYRRDCNDLFNEILWARISDMSRITLTTVRITPERKLSRLPAPFFDPNQRSTLRVPVVLPATGDRGALRAAGLVASWFGRIADFRKLSFPVSTTIPASGNAVEVGVNLPVDAEGGRPAGPMLAEVANPNDRWGTVLVVTGRTAQEVEVAARALVFSPDTLGGVASKVVSDVSLETRHPYDAPAFVPTDRPVRFGELVGAADLQGGGFAPAGMTLPFHLPPDLYTWRGRPFLMNMWVRAPGGPVVDLETSRVDVSLNNNYLQSYTLSPPGLWRKWSERLVNQHAGAVGHVTALPPWLLFGQNQLQFNFDARPIDRGACRRTPGDIHMSVDSDSTLDFRRGYHFAEMPNLSYFAEAAFPFSRMADLSETTVVLPDHPDTGTTGAFLDLMGFFGASTWYPAAGVTVMGADEVAQTPPKGDIVVLGTAAQLGGAASGLLARSPYVIHDRHITVGQRMGLQGIWYLFQDHDHAGLKDGVTANLNAPIAEAGVLLAAQSPYDSQRSVVAFTGDTPERIHDLVLSLRNKGDLPSLQGDLVLKNGDRFTSYRTAPVYTVGSLPLWLRLDWFLGHHPSALYLAGLAGAGLAALGVWAWLRGWSRRRIARDDLTGEL</sequence>
<name>BCSA5_KOMXY</name>
<gene>
    <name type="primary">bcsABII-B</name>
</gene>
<organism>
    <name type="scientific">Komagataeibacter xylinus</name>
    <name type="common">Gluconacetobacter xylinus</name>
    <dbReference type="NCBI Taxonomy" id="28448"/>
    <lineage>
        <taxon>Bacteria</taxon>
        <taxon>Pseudomonadati</taxon>
        <taxon>Pseudomonadota</taxon>
        <taxon>Alphaproteobacteria</taxon>
        <taxon>Acetobacterales</taxon>
        <taxon>Acetobacteraceae</taxon>
        <taxon>Komagataeibacter</taxon>
    </lineage>
</organism>